<keyword id="KW-0150">Chloroplast</keyword>
<keyword id="KW-0934">Plastid</keyword>
<keyword id="KW-0687">Ribonucleoprotein</keyword>
<keyword id="KW-0689">Ribosomal protein</keyword>
<keyword id="KW-0694">RNA-binding</keyword>
<keyword id="KW-0699">rRNA-binding</keyword>
<gene>
    <name evidence="1" type="primary">rps14</name>
</gene>
<dbReference type="EMBL" id="AF041468">
    <property type="protein sequence ID" value="AAC35697.1"/>
    <property type="molecule type" value="Genomic_DNA"/>
</dbReference>
<dbReference type="RefSeq" id="NP_050763.1">
    <property type="nucleotide sequence ID" value="NC_000926.1"/>
</dbReference>
<dbReference type="SMR" id="O78506"/>
<dbReference type="GeneID" id="857071"/>
<dbReference type="HOGENOM" id="CLU_139869_0_1_1"/>
<dbReference type="OMA" id="RIKFRDL"/>
<dbReference type="GO" id="GO:0009507">
    <property type="term" value="C:chloroplast"/>
    <property type="evidence" value="ECO:0007669"/>
    <property type="project" value="UniProtKB-SubCell"/>
</dbReference>
<dbReference type="GO" id="GO:0015935">
    <property type="term" value="C:small ribosomal subunit"/>
    <property type="evidence" value="ECO:0007669"/>
    <property type="project" value="TreeGrafter"/>
</dbReference>
<dbReference type="GO" id="GO:0019843">
    <property type="term" value="F:rRNA binding"/>
    <property type="evidence" value="ECO:0007669"/>
    <property type="project" value="UniProtKB-UniRule"/>
</dbReference>
<dbReference type="GO" id="GO:0003735">
    <property type="term" value="F:structural constituent of ribosome"/>
    <property type="evidence" value="ECO:0007669"/>
    <property type="project" value="InterPro"/>
</dbReference>
<dbReference type="GO" id="GO:0006412">
    <property type="term" value="P:translation"/>
    <property type="evidence" value="ECO:0007669"/>
    <property type="project" value="UniProtKB-UniRule"/>
</dbReference>
<dbReference type="FunFam" id="1.10.287.1480:FF:000001">
    <property type="entry name" value="30S ribosomal protein S14"/>
    <property type="match status" value="1"/>
</dbReference>
<dbReference type="Gene3D" id="1.10.287.1480">
    <property type="match status" value="1"/>
</dbReference>
<dbReference type="HAMAP" id="MF_00537">
    <property type="entry name" value="Ribosomal_uS14_1"/>
    <property type="match status" value="1"/>
</dbReference>
<dbReference type="InterPro" id="IPR001209">
    <property type="entry name" value="Ribosomal_uS14"/>
</dbReference>
<dbReference type="InterPro" id="IPR023036">
    <property type="entry name" value="Ribosomal_uS14_bac/plastid"/>
</dbReference>
<dbReference type="InterPro" id="IPR018271">
    <property type="entry name" value="Ribosomal_uS14_CS"/>
</dbReference>
<dbReference type="NCBIfam" id="NF006477">
    <property type="entry name" value="PRK08881.1"/>
    <property type="match status" value="1"/>
</dbReference>
<dbReference type="PANTHER" id="PTHR19836">
    <property type="entry name" value="30S RIBOSOMAL PROTEIN S14"/>
    <property type="match status" value="1"/>
</dbReference>
<dbReference type="PANTHER" id="PTHR19836:SF19">
    <property type="entry name" value="SMALL RIBOSOMAL SUBUNIT PROTEIN US14M"/>
    <property type="match status" value="1"/>
</dbReference>
<dbReference type="Pfam" id="PF00253">
    <property type="entry name" value="Ribosomal_S14"/>
    <property type="match status" value="1"/>
</dbReference>
<dbReference type="SUPFAM" id="SSF57716">
    <property type="entry name" value="Glucocorticoid receptor-like (DNA-binding domain)"/>
    <property type="match status" value="1"/>
</dbReference>
<dbReference type="PROSITE" id="PS00527">
    <property type="entry name" value="RIBOSOMAL_S14"/>
    <property type="match status" value="1"/>
</dbReference>
<protein>
    <recommendedName>
        <fullName evidence="1">Small ribosomal subunit protein uS14c</fullName>
    </recommendedName>
    <alternativeName>
        <fullName evidence="2">30S ribosomal protein S14, chloroplastic</fullName>
    </alternativeName>
</protein>
<geneLocation type="chloroplast"/>
<organism>
    <name type="scientific">Guillardia theta</name>
    <name type="common">Cryptophyte</name>
    <name type="synonym">Cryptomonas phi</name>
    <dbReference type="NCBI Taxonomy" id="55529"/>
    <lineage>
        <taxon>Eukaryota</taxon>
        <taxon>Cryptophyceae</taxon>
        <taxon>Pyrenomonadales</taxon>
        <taxon>Geminigeraceae</taxon>
        <taxon>Guillardia</taxon>
    </lineage>
</organism>
<proteinExistence type="inferred from homology"/>
<feature type="chain" id="PRO_0000130973" description="Small ribosomal subunit protein uS14c">
    <location>
        <begin position="1"/>
        <end position="100"/>
    </location>
</feature>
<sequence>MAKKSMIERERKREELVSKYEKKRLELKSKLKKTAEYEEKLEVYKKIQEIPRNAFPSRLRNRCWVTGRSRGYYRDFGLSRHVLREMVHDCLLPGVTKSSW</sequence>
<reference key="1">
    <citation type="journal article" date="1999" name="J. Mol. Evol.">
        <title>The plastid genome of the cryptophyte alga, Guillardia theta: complete sequence and conserved synteny groups confirm its common ancestry with red algae.</title>
        <authorList>
            <person name="Douglas S.E."/>
            <person name="Penny S.L."/>
        </authorList>
    </citation>
    <scope>NUCLEOTIDE SEQUENCE [LARGE SCALE GENOMIC DNA]</scope>
</reference>
<evidence type="ECO:0000255" key="1">
    <source>
        <dbReference type="HAMAP-Rule" id="MF_00537"/>
    </source>
</evidence>
<evidence type="ECO:0000305" key="2"/>
<comment type="function">
    <text evidence="1">Binds 16S rRNA, required for the assembly of 30S particles.</text>
</comment>
<comment type="subunit">
    <text evidence="1">Part of the 30S ribosomal subunit.</text>
</comment>
<comment type="subcellular location">
    <subcellularLocation>
        <location>Plastid</location>
        <location>Chloroplast</location>
    </subcellularLocation>
</comment>
<comment type="similarity">
    <text evidence="1">Belongs to the universal ribosomal protein uS14 family.</text>
</comment>
<name>RR14_GUITH</name>
<accession>O78506</accession>